<gene>
    <name type="primary">Snip1</name>
</gene>
<reference key="1">
    <citation type="journal article" date="2005" name="Science">
        <title>The transcriptional landscape of the mammalian genome.</title>
        <authorList>
            <person name="Carninci P."/>
            <person name="Kasukawa T."/>
            <person name="Katayama S."/>
            <person name="Gough J."/>
            <person name="Frith M.C."/>
            <person name="Maeda N."/>
            <person name="Oyama R."/>
            <person name="Ravasi T."/>
            <person name="Lenhard B."/>
            <person name="Wells C."/>
            <person name="Kodzius R."/>
            <person name="Shimokawa K."/>
            <person name="Bajic V.B."/>
            <person name="Brenner S.E."/>
            <person name="Batalov S."/>
            <person name="Forrest A.R."/>
            <person name="Zavolan M."/>
            <person name="Davis M.J."/>
            <person name="Wilming L.G."/>
            <person name="Aidinis V."/>
            <person name="Allen J.E."/>
            <person name="Ambesi-Impiombato A."/>
            <person name="Apweiler R."/>
            <person name="Aturaliya R.N."/>
            <person name="Bailey T.L."/>
            <person name="Bansal M."/>
            <person name="Baxter L."/>
            <person name="Beisel K.W."/>
            <person name="Bersano T."/>
            <person name="Bono H."/>
            <person name="Chalk A.M."/>
            <person name="Chiu K.P."/>
            <person name="Choudhary V."/>
            <person name="Christoffels A."/>
            <person name="Clutterbuck D.R."/>
            <person name="Crowe M.L."/>
            <person name="Dalla E."/>
            <person name="Dalrymple B.P."/>
            <person name="de Bono B."/>
            <person name="Della Gatta G."/>
            <person name="di Bernardo D."/>
            <person name="Down T."/>
            <person name="Engstrom P."/>
            <person name="Fagiolini M."/>
            <person name="Faulkner G."/>
            <person name="Fletcher C.F."/>
            <person name="Fukushima T."/>
            <person name="Furuno M."/>
            <person name="Futaki S."/>
            <person name="Gariboldi M."/>
            <person name="Georgii-Hemming P."/>
            <person name="Gingeras T.R."/>
            <person name="Gojobori T."/>
            <person name="Green R.E."/>
            <person name="Gustincich S."/>
            <person name="Harbers M."/>
            <person name="Hayashi Y."/>
            <person name="Hensch T.K."/>
            <person name="Hirokawa N."/>
            <person name="Hill D."/>
            <person name="Huminiecki L."/>
            <person name="Iacono M."/>
            <person name="Ikeo K."/>
            <person name="Iwama A."/>
            <person name="Ishikawa T."/>
            <person name="Jakt M."/>
            <person name="Kanapin A."/>
            <person name="Katoh M."/>
            <person name="Kawasawa Y."/>
            <person name="Kelso J."/>
            <person name="Kitamura H."/>
            <person name="Kitano H."/>
            <person name="Kollias G."/>
            <person name="Krishnan S.P."/>
            <person name="Kruger A."/>
            <person name="Kummerfeld S.K."/>
            <person name="Kurochkin I.V."/>
            <person name="Lareau L.F."/>
            <person name="Lazarevic D."/>
            <person name="Lipovich L."/>
            <person name="Liu J."/>
            <person name="Liuni S."/>
            <person name="McWilliam S."/>
            <person name="Madan Babu M."/>
            <person name="Madera M."/>
            <person name="Marchionni L."/>
            <person name="Matsuda H."/>
            <person name="Matsuzawa S."/>
            <person name="Miki H."/>
            <person name="Mignone F."/>
            <person name="Miyake S."/>
            <person name="Morris K."/>
            <person name="Mottagui-Tabar S."/>
            <person name="Mulder N."/>
            <person name="Nakano N."/>
            <person name="Nakauchi H."/>
            <person name="Ng P."/>
            <person name="Nilsson R."/>
            <person name="Nishiguchi S."/>
            <person name="Nishikawa S."/>
            <person name="Nori F."/>
            <person name="Ohara O."/>
            <person name="Okazaki Y."/>
            <person name="Orlando V."/>
            <person name="Pang K.C."/>
            <person name="Pavan W.J."/>
            <person name="Pavesi G."/>
            <person name="Pesole G."/>
            <person name="Petrovsky N."/>
            <person name="Piazza S."/>
            <person name="Reed J."/>
            <person name="Reid J.F."/>
            <person name="Ring B.Z."/>
            <person name="Ringwald M."/>
            <person name="Rost B."/>
            <person name="Ruan Y."/>
            <person name="Salzberg S.L."/>
            <person name="Sandelin A."/>
            <person name="Schneider C."/>
            <person name="Schoenbach C."/>
            <person name="Sekiguchi K."/>
            <person name="Semple C.A."/>
            <person name="Seno S."/>
            <person name="Sessa L."/>
            <person name="Sheng Y."/>
            <person name="Shibata Y."/>
            <person name="Shimada H."/>
            <person name="Shimada K."/>
            <person name="Silva D."/>
            <person name="Sinclair B."/>
            <person name="Sperling S."/>
            <person name="Stupka E."/>
            <person name="Sugiura K."/>
            <person name="Sultana R."/>
            <person name="Takenaka Y."/>
            <person name="Taki K."/>
            <person name="Tammoja K."/>
            <person name="Tan S.L."/>
            <person name="Tang S."/>
            <person name="Taylor M.S."/>
            <person name="Tegner J."/>
            <person name="Teichmann S.A."/>
            <person name="Ueda H.R."/>
            <person name="van Nimwegen E."/>
            <person name="Verardo R."/>
            <person name="Wei C.L."/>
            <person name="Yagi K."/>
            <person name="Yamanishi H."/>
            <person name="Zabarovsky E."/>
            <person name="Zhu S."/>
            <person name="Zimmer A."/>
            <person name="Hide W."/>
            <person name="Bult C."/>
            <person name="Grimmond S.M."/>
            <person name="Teasdale R.D."/>
            <person name="Liu E.T."/>
            <person name="Brusic V."/>
            <person name="Quackenbush J."/>
            <person name="Wahlestedt C."/>
            <person name="Mattick J.S."/>
            <person name="Hume D.A."/>
            <person name="Kai C."/>
            <person name="Sasaki D."/>
            <person name="Tomaru Y."/>
            <person name="Fukuda S."/>
            <person name="Kanamori-Katayama M."/>
            <person name="Suzuki M."/>
            <person name="Aoki J."/>
            <person name="Arakawa T."/>
            <person name="Iida J."/>
            <person name="Imamura K."/>
            <person name="Itoh M."/>
            <person name="Kato T."/>
            <person name="Kawaji H."/>
            <person name="Kawagashira N."/>
            <person name="Kawashima T."/>
            <person name="Kojima M."/>
            <person name="Kondo S."/>
            <person name="Konno H."/>
            <person name="Nakano K."/>
            <person name="Ninomiya N."/>
            <person name="Nishio T."/>
            <person name="Okada M."/>
            <person name="Plessy C."/>
            <person name="Shibata K."/>
            <person name="Shiraki T."/>
            <person name="Suzuki S."/>
            <person name="Tagami M."/>
            <person name="Waki K."/>
            <person name="Watahiki A."/>
            <person name="Okamura-Oho Y."/>
            <person name="Suzuki H."/>
            <person name="Kawai J."/>
            <person name="Hayashizaki Y."/>
        </authorList>
    </citation>
    <scope>NUCLEOTIDE SEQUENCE [LARGE SCALE MRNA]</scope>
    <source>
        <strain>C57BL/6J</strain>
        <tissue>Embryonic stem cell</tissue>
        <tissue>Spleen</tissue>
        <tissue>Testis</tissue>
        <tissue>Thymus</tissue>
    </source>
</reference>
<reference key="2">
    <citation type="journal article" date="2004" name="Genome Res.">
        <title>The status, quality, and expansion of the NIH full-length cDNA project: the Mammalian Gene Collection (MGC).</title>
        <authorList>
            <consortium name="The MGC Project Team"/>
        </authorList>
    </citation>
    <scope>NUCLEOTIDE SEQUENCE [LARGE SCALE MRNA]</scope>
    <source>
        <strain>C57BL/6J</strain>
        <tissue>Mammary gland</tissue>
    </source>
</reference>
<reference key="3">
    <citation type="journal article" date="2007" name="Proc. Natl. Acad. Sci. U.S.A.">
        <title>Large-scale phosphorylation analysis of mouse liver.</title>
        <authorList>
            <person name="Villen J."/>
            <person name="Beausoleil S.A."/>
            <person name="Gerber S.A."/>
            <person name="Gygi S.P."/>
        </authorList>
    </citation>
    <scope>PHOSPHORYLATION [LARGE SCALE ANALYSIS] AT SER-18</scope>
    <scope>IDENTIFICATION BY MASS SPECTROMETRY [LARGE SCALE ANALYSIS]</scope>
    <source>
        <tissue>Liver</tissue>
    </source>
</reference>
<reference key="4">
    <citation type="journal article" date="2009" name="Immunity">
        <title>The phagosomal proteome in interferon-gamma-activated macrophages.</title>
        <authorList>
            <person name="Trost M."/>
            <person name="English L."/>
            <person name="Lemieux S."/>
            <person name="Courcelles M."/>
            <person name="Desjardins M."/>
            <person name="Thibault P."/>
        </authorList>
    </citation>
    <scope>PHOSPHORYLATION [LARGE SCALE ANALYSIS] AT SER-18</scope>
    <scope>IDENTIFICATION BY MASS SPECTROMETRY [LARGE SCALE ANALYSIS]</scope>
</reference>
<reference key="5">
    <citation type="journal article" date="2010" name="Cell">
        <title>A tissue-specific atlas of mouse protein phosphorylation and expression.</title>
        <authorList>
            <person name="Huttlin E.L."/>
            <person name="Jedrychowski M.P."/>
            <person name="Elias J.E."/>
            <person name="Goswami T."/>
            <person name="Rad R."/>
            <person name="Beausoleil S.A."/>
            <person name="Villen J."/>
            <person name="Haas W."/>
            <person name="Sowa M.E."/>
            <person name="Gygi S.P."/>
        </authorList>
    </citation>
    <scope>PHOSPHORYLATION [LARGE SCALE ANALYSIS] AT SER-18; SER-48 AND SER-50</scope>
    <scope>IDENTIFICATION BY MASS SPECTROMETRY [LARGE SCALE ANALYSIS]</scope>
    <source>
        <tissue>Brain</tissue>
        <tissue>Brown adipose tissue</tissue>
        <tissue>Heart</tissue>
        <tissue>Kidney</tissue>
        <tissue>Lung</tissue>
        <tissue>Spleen</tissue>
        <tissue>Testis</tissue>
    </source>
</reference>
<comment type="function">
    <text evidence="3">Required for pre-mRNA splicing as component of the spliceosome. As a component of the minor spliceosome, involved in the splicing of U12-type introns in pre-mRNAs (By similarity). Down-regulates NF-kappa-B signaling by competing with RELA for CREBBP/EP300 binding. Involved in the microRNA (miRNA) biogenesis. May be involved in cyclin-D1/CCND1 mRNA stability through the SNARP complex which associates with both the 3'end of the CCND1 gene and its mRNA.</text>
</comment>
<comment type="subunit">
    <text evidence="3">Component of activated spliceosome complexes. Binds SMAD4 and CREBBP/EP300. Component of the minor spliceosome, which splices U12-type introns (By similarity). Binds the SMAD1/OAZ1/PSMB4 complex. Interacts with DROSHA and SMARCA4. Component of the SNARP complex which consists at least of SNIP1, SNW1, THRAP3, BCLAF1 and PNN.</text>
</comment>
<comment type="subcellular location">
    <subcellularLocation>
        <location evidence="3">Nucleus</location>
    </subcellularLocation>
</comment>
<comment type="PTM">
    <text evidence="1">Degraded by the proteasome upon binding to the SMAD1/OAZ1/PSMB4 complex.</text>
</comment>
<evidence type="ECO:0000250" key="1"/>
<evidence type="ECO:0000250" key="2">
    <source>
        <dbReference type="UniProtKB" id="Q5M9G6"/>
    </source>
</evidence>
<evidence type="ECO:0000250" key="3">
    <source>
        <dbReference type="UniProtKB" id="Q8TAD8"/>
    </source>
</evidence>
<evidence type="ECO:0000255" key="4"/>
<evidence type="ECO:0000255" key="5">
    <source>
        <dbReference type="PROSITE-ProRule" id="PRU00086"/>
    </source>
</evidence>
<evidence type="ECO:0000256" key="6">
    <source>
        <dbReference type="SAM" id="MobiDB-lite"/>
    </source>
</evidence>
<evidence type="ECO:0000305" key="7"/>
<evidence type="ECO:0007744" key="8">
    <source>
    </source>
</evidence>
<evidence type="ECO:0007744" key="9">
    <source>
    </source>
</evidence>
<evidence type="ECO:0007744" key="10">
    <source>
    </source>
</evidence>
<organism>
    <name type="scientific">Mus musculus</name>
    <name type="common">Mouse</name>
    <dbReference type="NCBI Taxonomy" id="10090"/>
    <lineage>
        <taxon>Eukaryota</taxon>
        <taxon>Metazoa</taxon>
        <taxon>Chordata</taxon>
        <taxon>Craniata</taxon>
        <taxon>Vertebrata</taxon>
        <taxon>Euteleostomi</taxon>
        <taxon>Mammalia</taxon>
        <taxon>Eutheria</taxon>
        <taxon>Euarchontoglires</taxon>
        <taxon>Glires</taxon>
        <taxon>Rodentia</taxon>
        <taxon>Myomorpha</taxon>
        <taxon>Muroidea</taxon>
        <taxon>Muridae</taxon>
        <taxon>Murinae</taxon>
        <taxon>Mus</taxon>
        <taxon>Mus</taxon>
    </lineage>
</organism>
<feature type="chain" id="PRO_0000072010" description="Smad nuclear-interacting protein 1">
    <location>
        <begin position="1"/>
        <end position="383"/>
    </location>
</feature>
<feature type="domain" description="FHA" evidence="5">
    <location>
        <begin position="268"/>
        <end position="331"/>
    </location>
</feature>
<feature type="region of interest" description="Disordered" evidence="6">
    <location>
        <begin position="1"/>
        <end position="209"/>
    </location>
</feature>
<feature type="region of interest" description="Disordered" evidence="6">
    <location>
        <begin position="359"/>
        <end position="383"/>
    </location>
</feature>
<feature type="coiled-coil region" evidence="4">
    <location>
        <begin position="153"/>
        <end position="194"/>
    </location>
</feature>
<feature type="compositionally biased region" description="Basic and acidic residues" evidence="6">
    <location>
        <begin position="1"/>
        <end position="10"/>
    </location>
</feature>
<feature type="compositionally biased region" description="Basic and acidic residues" evidence="6">
    <location>
        <begin position="28"/>
        <end position="43"/>
    </location>
</feature>
<feature type="compositionally biased region" description="Low complexity" evidence="6">
    <location>
        <begin position="44"/>
        <end position="56"/>
    </location>
</feature>
<feature type="compositionally biased region" description="Basic residues" evidence="6">
    <location>
        <begin position="59"/>
        <end position="90"/>
    </location>
</feature>
<feature type="compositionally biased region" description="Basic and acidic residues" evidence="6">
    <location>
        <begin position="99"/>
        <end position="134"/>
    </location>
</feature>
<feature type="compositionally biased region" description="Basic and acidic residues" evidence="6">
    <location>
        <begin position="143"/>
        <end position="159"/>
    </location>
</feature>
<feature type="compositionally biased region" description="Basic and acidic residues" evidence="6">
    <location>
        <begin position="359"/>
        <end position="369"/>
    </location>
</feature>
<feature type="compositionally biased region" description="Acidic residues" evidence="6">
    <location>
        <begin position="370"/>
        <end position="383"/>
    </location>
</feature>
<feature type="modified residue" description="Phosphoserine" evidence="8 9 10">
    <location>
        <position position="18"/>
    </location>
</feature>
<feature type="modified residue" description="Phosphoserine" evidence="3">
    <location>
        <position position="33"/>
    </location>
</feature>
<feature type="modified residue" description="Phosphoserine" evidence="10">
    <location>
        <position position="48"/>
    </location>
</feature>
<feature type="modified residue" description="Phosphoserine" evidence="10">
    <location>
        <position position="50"/>
    </location>
</feature>
<feature type="modified residue" description="Phosphoserine" evidence="2">
    <location>
        <position position="91"/>
    </location>
</feature>
<feature type="modified residue" description="Phosphoserine" evidence="2">
    <location>
        <position position="145"/>
    </location>
</feature>
<feature type="modified residue" description="Phosphoserine" evidence="3">
    <location>
        <position position="381"/>
    </location>
</feature>
<feature type="cross-link" description="Glycyl lysine isopeptide (Lys-Gly) (interchain with G-Cter in SUMO); alternate" evidence="1">
    <location>
        <position position="28"/>
    </location>
</feature>
<feature type="cross-link" description="Glycyl lysine isopeptide (Lys-Gly) (interchain with G-Cter in SUMO1); alternate" evidence="3">
    <location>
        <position position="28"/>
    </location>
</feature>
<feature type="cross-link" description="Glycyl lysine isopeptide (Lys-Gly) (interchain with G-Cter in SUMO2); alternate" evidence="3">
    <location>
        <position position="28"/>
    </location>
</feature>
<feature type="cross-link" description="Glycyl lysine isopeptide (Lys-Gly) (interchain with G-Cter in SUMO2)" evidence="3">
    <location>
        <position position="100"/>
    </location>
</feature>
<feature type="cross-link" description="Glycyl lysine isopeptide (Lys-Gly) (interchain with G-Cter in SUMO2)" evidence="3">
    <location>
        <position position="210"/>
    </location>
</feature>
<feature type="sequence conflict" description="In Ref. 1; BAC33680." evidence="7" ref="1">
    <original>T</original>
    <variation>P</variation>
    <location>
        <position position="223"/>
    </location>
</feature>
<protein>
    <recommendedName>
        <fullName>Smad nuclear-interacting protein 1</fullName>
    </recommendedName>
</protein>
<accession>Q8BIZ6</accession>
<accession>Q3V106</accession>
<accession>Q8BIZ4</accession>
<proteinExistence type="evidence at protein level"/>
<sequence length="383" mass="44415">MKAGKSERERSGRRRHRSGDALTTVVVKQERLSPEPVAHRRPDAPAASLSPPAAEPGHSGHRGSRARSPAKKKSKSSGRRSKSPRTKRSQSPHYPMVKVKQEREDHPRRGREDRQHREPSEQEHRRARNSERDRHRGHSRQGRSSDERPVSGQDRDRDSQNLQAQEEERDFHNARRREHRQQNESAGSEAQEVIPRPAGNRSKEVPVKEKPSFELSGALLEDTNTFRGVVIKYSEPPEARIPKKRWRLYPFKNDEVLPVMYIHRQSAYLLGRHRRIADIPIDHPSCSKQHAVFQYRLVEYTRADGTVGRRVKPYIIDLGSGNGTFLNNKRIEPQRYYELKEKDVLKFGFSSREYVLLHESSDTSELDRKEDEDDEEEEMVSDS</sequence>
<keyword id="KW-0175">Coiled coil</keyword>
<keyword id="KW-1017">Isopeptide bond</keyword>
<keyword id="KW-0507">mRNA processing</keyword>
<keyword id="KW-0508">mRNA splicing</keyword>
<keyword id="KW-0539">Nucleus</keyword>
<keyword id="KW-0597">Phosphoprotein</keyword>
<keyword id="KW-1185">Reference proteome</keyword>
<keyword id="KW-0943">RNA-mediated gene silencing</keyword>
<keyword id="KW-0747">Spliceosome</keyword>
<keyword id="KW-0832">Ubl conjugation</keyword>
<dbReference type="EMBL" id="AK040571">
    <property type="protein sequence ID" value="BAE20582.1"/>
    <property type="molecule type" value="mRNA"/>
</dbReference>
<dbReference type="EMBL" id="AK049254">
    <property type="protein sequence ID" value="BAC33638.1"/>
    <property type="molecule type" value="mRNA"/>
</dbReference>
<dbReference type="EMBL" id="AK049318">
    <property type="protein sequence ID" value="BAC33680.1"/>
    <property type="molecule type" value="mRNA"/>
</dbReference>
<dbReference type="EMBL" id="AK132768">
    <property type="protein sequence ID" value="BAE21347.1"/>
    <property type="molecule type" value="mRNA"/>
</dbReference>
<dbReference type="EMBL" id="AK143801">
    <property type="protein sequence ID" value="BAE25543.1"/>
    <property type="molecule type" value="mRNA"/>
</dbReference>
<dbReference type="EMBL" id="BC064067">
    <property type="protein sequence ID" value="AAH64067.1"/>
    <property type="molecule type" value="mRNA"/>
</dbReference>
<dbReference type="CCDS" id="CCDS18636.1"/>
<dbReference type="RefSeq" id="NP_780455.2">
    <property type="nucleotide sequence ID" value="NM_175246.5"/>
</dbReference>
<dbReference type="SMR" id="Q8BIZ6"/>
<dbReference type="BioGRID" id="218318">
    <property type="interactions" value="2"/>
</dbReference>
<dbReference type="FunCoup" id="Q8BIZ6">
    <property type="interactions" value="3504"/>
</dbReference>
<dbReference type="IntAct" id="Q8BIZ6">
    <property type="interactions" value="4"/>
</dbReference>
<dbReference type="MINT" id="Q8BIZ6"/>
<dbReference type="STRING" id="10090.ENSMUSP00000060721"/>
<dbReference type="iPTMnet" id="Q8BIZ6"/>
<dbReference type="PhosphoSitePlus" id="Q8BIZ6"/>
<dbReference type="jPOST" id="Q8BIZ6"/>
<dbReference type="PaxDb" id="10090-ENSMUSP00000060721"/>
<dbReference type="PeptideAtlas" id="Q8BIZ6"/>
<dbReference type="ProteomicsDB" id="261291"/>
<dbReference type="Pumba" id="Q8BIZ6"/>
<dbReference type="Antibodypedia" id="17552">
    <property type="antibodies" value="177 antibodies from 26 providers"/>
</dbReference>
<dbReference type="DNASU" id="76793"/>
<dbReference type="Ensembl" id="ENSMUST00000052183.7">
    <property type="protein sequence ID" value="ENSMUSP00000060721.7"/>
    <property type="gene ID" value="ENSMUSG00000050213.7"/>
</dbReference>
<dbReference type="GeneID" id="76793"/>
<dbReference type="KEGG" id="mmu:76793"/>
<dbReference type="UCSC" id="uc008urq.2">
    <property type="organism name" value="mouse"/>
</dbReference>
<dbReference type="AGR" id="MGI:2156003"/>
<dbReference type="CTD" id="79753"/>
<dbReference type="MGI" id="MGI:2156003">
    <property type="gene designation" value="Snip1"/>
</dbReference>
<dbReference type="VEuPathDB" id="HostDB:ENSMUSG00000050213"/>
<dbReference type="eggNOG" id="KOG1882">
    <property type="taxonomic scope" value="Eukaryota"/>
</dbReference>
<dbReference type="GeneTree" id="ENSGT00940000156553"/>
<dbReference type="HOGENOM" id="CLU_022457_2_0_1"/>
<dbReference type="InParanoid" id="Q8BIZ6"/>
<dbReference type="OMA" id="WQKSCWL"/>
<dbReference type="OrthoDB" id="444265at2759"/>
<dbReference type="PhylomeDB" id="Q8BIZ6"/>
<dbReference type="TreeFam" id="TF312797"/>
<dbReference type="Reactome" id="R-MMU-72163">
    <property type="pathway name" value="mRNA Splicing - Major Pathway"/>
</dbReference>
<dbReference type="BioGRID-ORCS" id="76793">
    <property type="hits" value="24 hits in 79 CRISPR screens"/>
</dbReference>
<dbReference type="ChiTaRS" id="Snip1">
    <property type="organism name" value="mouse"/>
</dbReference>
<dbReference type="PRO" id="PR:Q8BIZ6"/>
<dbReference type="Proteomes" id="UP000000589">
    <property type="component" value="Chromosome 4"/>
</dbReference>
<dbReference type="RNAct" id="Q8BIZ6">
    <property type="molecule type" value="protein"/>
</dbReference>
<dbReference type="Bgee" id="ENSMUSG00000050213">
    <property type="expression patterns" value="Expressed in spermatocyte and 269 other cell types or tissues"/>
</dbReference>
<dbReference type="GO" id="GO:0005829">
    <property type="term" value="C:cytosol"/>
    <property type="evidence" value="ECO:0007669"/>
    <property type="project" value="Ensembl"/>
</dbReference>
<dbReference type="GO" id="GO:0005654">
    <property type="term" value="C:nucleoplasm"/>
    <property type="evidence" value="ECO:0007669"/>
    <property type="project" value="Ensembl"/>
</dbReference>
<dbReference type="GO" id="GO:0005634">
    <property type="term" value="C:nucleus"/>
    <property type="evidence" value="ECO:0000314"/>
    <property type="project" value="MGI"/>
</dbReference>
<dbReference type="GO" id="GO:0071005">
    <property type="term" value="C:U2-type precatalytic spliceosome"/>
    <property type="evidence" value="ECO:0000250"/>
    <property type="project" value="UniProtKB"/>
</dbReference>
<dbReference type="GO" id="GO:0140416">
    <property type="term" value="F:transcription regulator inhibitor activity"/>
    <property type="evidence" value="ECO:0000314"/>
    <property type="project" value="MGI"/>
</dbReference>
<dbReference type="GO" id="GO:0035196">
    <property type="term" value="P:miRNA processing"/>
    <property type="evidence" value="ECO:0000250"/>
    <property type="project" value="UniProtKB"/>
</dbReference>
<dbReference type="GO" id="GO:0000398">
    <property type="term" value="P:mRNA splicing, via spliceosome"/>
    <property type="evidence" value="ECO:0000250"/>
    <property type="project" value="UniProtKB"/>
</dbReference>
<dbReference type="GO" id="GO:0043124">
    <property type="term" value="P:negative regulation of canonical NF-kappaB signal transduction"/>
    <property type="evidence" value="ECO:0000314"/>
    <property type="project" value="MGI"/>
</dbReference>
<dbReference type="CDD" id="cd22718">
    <property type="entry name" value="FHA_SNIP1"/>
    <property type="match status" value="1"/>
</dbReference>
<dbReference type="FunFam" id="2.60.200.20:FF:000008">
    <property type="entry name" value="smad nuclear-interacting protein 1"/>
    <property type="match status" value="1"/>
</dbReference>
<dbReference type="Gene3D" id="2.60.200.20">
    <property type="match status" value="1"/>
</dbReference>
<dbReference type="InterPro" id="IPR050923">
    <property type="entry name" value="Cell_Proc_Reg/RNA_Proc"/>
</dbReference>
<dbReference type="InterPro" id="IPR000253">
    <property type="entry name" value="FHA_dom"/>
</dbReference>
<dbReference type="InterPro" id="IPR008984">
    <property type="entry name" value="SMAD_FHA_dom_sf"/>
</dbReference>
<dbReference type="PANTHER" id="PTHR23308">
    <property type="entry name" value="NUCLEAR INHIBITOR OF PROTEIN PHOSPHATASE-1"/>
    <property type="match status" value="1"/>
</dbReference>
<dbReference type="Pfam" id="PF00498">
    <property type="entry name" value="FHA"/>
    <property type="match status" value="1"/>
</dbReference>
<dbReference type="SMART" id="SM00240">
    <property type="entry name" value="FHA"/>
    <property type="match status" value="1"/>
</dbReference>
<dbReference type="SUPFAM" id="SSF49879">
    <property type="entry name" value="SMAD/FHA domain"/>
    <property type="match status" value="1"/>
</dbReference>
<dbReference type="PROSITE" id="PS50006">
    <property type="entry name" value="FHA_DOMAIN"/>
    <property type="match status" value="1"/>
</dbReference>
<name>SNIP1_MOUSE</name>